<comment type="function">
    <text evidence="1">Component of the 40S small ribosomal subunit (By similarity). Plays an important role in controlling cell growth and proliferation through the selective translation of particular classes of mRNA (By similarity).</text>
</comment>
<comment type="PTM">
    <text evidence="1">Ribosomal protein S6 is the major substrate of protein kinases in eukaryote ribosomes.</text>
</comment>
<comment type="similarity">
    <text evidence="3">Belongs to the eukaryotic ribosomal protein eS6 family.</text>
</comment>
<accession>Q9NE83</accession>
<accession>Q4FWR9</accession>
<accession>Q4QC05</accession>
<feature type="chain" id="PRO_0000137328" description="Small ribosomal subunit protein eS6">
    <location>
        <begin position="1"/>
        <end position="249"/>
    </location>
</feature>
<feature type="region of interest" description="Disordered" evidence="2">
    <location>
        <begin position="223"/>
        <end position="249"/>
    </location>
</feature>
<feature type="compositionally biased region" description="Basic residues" evidence="2">
    <location>
        <begin position="223"/>
        <end position="238"/>
    </location>
</feature>
<feature type="helix" evidence="4">
    <location>
        <begin position="218"/>
        <end position="229"/>
    </location>
</feature>
<feature type="turn" evidence="4">
    <location>
        <begin position="230"/>
        <end position="234"/>
    </location>
</feature>
<feature type="helix" evidence="4">
    <location>
        <begin position="235"/>
        <end position="243"/>
    </location>
</feature>
<feature type="turn" evidence="4">
    <location>
        <begin position="244"/>
        <end position="248"/>
    </location>
</feature>
<name>RS6_LEIMA</name>
<gene>
    <name type="primary">RPS6</name>
    <name type="ORF">L3640.11</name>
    <name type="ORF">Lmj_1130</name>
    <name type="ORF">LmjF21.1780</name>
    <name type="ORF">LmjF_21_1780</name>
</gene>
<protein>
    <recommendedName>
        <fullName evidence="3">Small ribosomal subunit protein eS6</fullName>
    </recommendedName>
    <alternativeName>
        <fullName>40S ribosomal protein S6</fullName>
    </alternativeName>
</protein>
<keyword id="KW-0002">3D-structure</keyword>
<keyword id="KW-0597">Phosphoprotein</keyword>
<keyword id="KW-1185">Reference proteome</keyword>
<keyword id="KW-0687">Ribonucleoprotein</keyword>
<keyword id="KW-0689">Ribosomal protein</keyword>
<dbReference type="EMBL" id="FR796417">
    <property type="protein sequence ID" value="CAJ05109.1"/>
    <property type="molecule type" value="Genomic_DNA"/>
</dbReference>
<dbReference type="RefSeq" id="XP_001683143.1">
    <property type="nucleotide sequence ID" value="XM_001683091.1"/>
</dbReference>
<dbReference type="RefSeq" id="XP_003722593.1">
    <property type="nucleotide sequence ID" value="XM_003722545.1"/>
</dbReference>
<dbReference type="PDB" id="5OSG">
    <property type="method" value="EM"/>
    <property type="resolution" value="2.90 A"/>
    <property type="chains" value="P=1-249"/>
</dbReference>
<dbReference type="PDB" id="8A3W">
    <property type="method" value="EM"/>
    <property type="resolution" value="2.89 A"/>
    <property type="chains" value="SG=1-249"/>
</dbReference>
<dbReference type="PDB" id="8A98">
    <property type="method" value="EM"/>
    <property type="resolution" value="2.46 A"/>
    <property type="chains" value="SG=1-249"/>
</dbReference>
<dbReference type="PDB" id="8OVJ">
    <property type="method" value="EM"/>
    <property type="resolution" value="2.40 A"/>
    <property type="chains" value="SG=1-249"/>
</dbReference>
<dbReference type="PDB" id="8QHU">
    <property type="method" value="EM"/>
    <property type="resolution" value="2.72 A"/>
    <property type="chains" value="SG=1-249"/>
</dbReference>
<dbReference type="PDB" id="8QIE">
    <property type="method" value="EM"/>
    <property type="resolution" value="2.43 A"/>
    <property type="chains" value="SG=1-249"/>
</dbReference>
<dbReference type="PDB" id="8RXH">
    <property type="method" value="EM"/>
    <property type="resolution" value="2.93 A"/>
    <property type="chains" value="SG=1-249"/>
</dbReference>
<dbReference type="PDB" id="8RXX">
    <property type="method" value="EM"/>
    <property type="resolution" value="2.97 A"/>
    <property type="chains" value="SG=1-249"/>
</dbReference>
<dbReference type="PDBsum" id="5OSG"/>
<dbReference type="PDBsum" id="8A3W"/>
<dbReference type="PDBsum" id="8A98"/>
<dbReference type="PDBsum" id="8OVJ"/>
<dbReference type="PDBsum" id="8QHU"/>
<dbReference type="PDBsum" id="8QIE"/>
<dbReference type="PDBsum" id="8RXH"/>
<dbReference type="PDBsum" id="8RXX"/>
<dbReference type="EMDB" id="EMD-15124"/>
<dbReference type="EMDB" id="EMD-15272"/>
<dbReference type="EMDB" id="EMD-17216"/>
<dbReference type="EMDB" id="EMD-18419"/>
<dbReference type="EMDB" id="EMD-18437"/>
<dbReference type="EMDB" id="EMD-19576"/>
<dbReference type="EMDB" id="EMD-19582"/>
<dbReference type="SMR" id="Q9NE83"/>
<dbReference type="FunCoup" id="Q9NE83">
    <property type="interactions" value="513"/>
</dbReference>
<dbReference type="STRING" id="5664.Q9NE83"/>
<dbReference type="EnsemblProtists" id="CAJ05109">
    <property type="protein sequence ID" value="CAJ05109"/>
    <property type="gene ID" value="LMJF_21_1780"/>
</dbReference>
<dbReference type="GeneID" id="5651750"/>
<dbReference type="KEGG" id="lma:LMJF_21_1780"/>
<dbReference type="KEGG" id="lma:LMJF_35_2010"/>
<dbReference type="VEuPathDB" id="TriTrypDB:LmjF.21.1780"/>
<dbReference type="VEuPathDB" id="TriTrypDB:LMJFC_350027400"/>
<dbReference type="VEuPathDB" id="TriTrypDB:LMJLV39_210027300"/>
<dbReference type="VEuPathDB" id="TriTrypDB:LMJSD75_350025900"/>
<dbReference type="eggNOG" id="KOG1646">
    <property type="taxonomic scope" value="Eukaryota"/>
</dbReference>
<dbReference type="InParanoid" id="Q9NE83"/>
<dbReference type="OMA" id="YVITHEK"/>
<dbReference type="Proteomes" id="UP000000542">
    <property type="component" value="Chromosome 21"/>
</dbReference>
<dbReference type="GO" id="GO:1990904">
    <property type="term" value="C:ribonucleoprotein complex"/>
    <property type="evidence" value="ECO:0007669"/>
    <property type="project" value="UniProtKB-KW"/>
</dbReference>
<dbReference type="GO" id="GO:0005840">
    <property type="term" value="C:ribosome"/>
    <property type="evidence" value="ECO:0007669"/>
    <property type="project" value="UniProtKB-KW"/>
</dbReference>
<dbReference type="GO" id="GO:0003735">
    <property type="term" value="F:structural constituent of ribosome"/>
    <property type="evidence" value="ECO:0007669"/>
    <property type="project" value="InterPro"/>
</dbReference>
<dbReference type="GO" id="GO:0006412">
    <property type="term" value="P:translation"/>
    <property type="evidence" value="ECO:0007669"/>
    <property type="project" value="InterPro"/>
</dbReference>
<dbReference type="FunFam" id="1.20.5.2650:FF:000004">
    <property type="entry name" value="40S ribosomal protein S6"/>
    <property type="match status" value="1"/>
</dbReference>
<dbReference type="Gene3D" id="1.20.5.2650">
    <property type="match status" value="1"/>
</dbReference>
<dbReference type="InterPro" id="IPR001377">
    <property type="entry name" value="Ribosomal_eS6"/>
</dbReference>
<dbReference type="InterPro" id="IPR014401">
    <property type="entry name" value="Ribosomal_eS6-like"/>
</dbReference>
<dbReference type="InterPro" id="IPR018282">
    <property type="entry name" value="Ribosomal_eS6_CS"/>
</dbReference>
<dbReference type="PANTHER" id="PTHR11502">
    <property type="entry name" value="40S RIBOSOMAL PROTEIN S6"/>
    <property type="match status" value="1"/>
</dbReference>
<dbReference type="Pfam" id="PF01092">
    <property type="entry name" value="Ribosomal_S6e"/>
    <property type="match status" value="1"/>
</dbReference>
<dbReference type="PIRSF" id="PIRSF002129">
    <property type="entry name" value="Ribosom_S6_euk"/>
    <property type="match status" value="1"/>
</dbReference>
<dbReference type="SMART" id="SM01405">
    <property type="entry name" value="Ribosomal_S6e"/>
    <property type="match status" value="1"/>
</dbReference>
<dbReference type="PROSITE" id="PS00578">
    <property type="entry name" value="RIBOSOMAL_S6E"/>
    <property type="match status" value="1"/>
</dbReference>
<sequence length="249" mass="28304">MKLNIAYPRNGTVKQFEISDEVLRRVQLQDYRLGNEVDGAIFGSEFKGYIFRLRGGSDKDGFPMVPGVLASSRVSLLVKRGAIGFNTFRGYQGERRRKNVRGCVLASDIALVNVTISKVGDQPIEGVTDTTAPRRLGPKRASKIRKLFNLSRTEDVRKYVVRRRVVKSGKKDRLKAPKIQRLITPRVKARRAKKAKDAIAKVRASAAERREYLRLIASNRRALRQRDHSKKHTRKVHAQRAEVAAFQKK</sequence>
<reference key="1">
    <citation type="journal article" date="2005" name="Science">
        <title>The genome of the kinetoplastid parasite, Leishmania major.</title>
        <authorList>
            <person name="Ivens A.C."/>
            <person name="Peacock C.S."/>
            <person name="Worthey E.A."/>
            <person name="Murphy L."/>
            <person name="Aggarwal G."/>
            <person name="Berriman M."/>
            <person name="Sisk E."/>
            <person name="Rajandream M.A."/>
            <person name="Adlem E."/>
            <person name="Aert R."/>
            <person name="Anupama A."/>
            <person name="Apostolou Z."/>
            <person name="Attipoe P."/>
            <person name="Bason N."/>
            <person name="Bauser C."/>
            <person name="Beck A."/>
            <person name="Beverley S.M."/>
            <person name="Bianchettin G."/>
            <person name="Borzym K."/>
            <person name="Bothe G."/>
            <person name="Bruschi C.V."/>
            <person name="Collins M."/>
            <person name="Cadag E."/>
            <person name="Ciarloni L."/>
            <person name="Clayton C."/>
            <person name="Coulson R.M.R."/>
            <person name="Cronin A."/>
            <person name="Cruz A.K."/>
            <person name="Davies R.M."/>
            <person name="De Gaudenzi J."/>
            <person name="Dobson D.E."/>
            <person name="Duesterhoeft A."/>
            <person name="Fazelina G."/>
            <person name="Fosker N."/>
            <person name="Frasch A.C."/>
            <person name="Fraser A."/>
            <person name="Fuchs M."/>
            <person name="Gabel C."/>
            <person name="Goble A."/>
            <person name="Goffeau A."/>
            <person name="Harris D."/>
            <person name="Hertz-Fowler C."/>
            <person name="Hilbert H."/>
            <person name="Horn D."/>
            <person name="Huang Y."/>
            <person name="Klages S."/>
            <person name="Knights A."/>
            <person name="Kube M."/>
            <person name="Larke N."/>
            <person name="Litvin L."/>
            <person name="Lord A."/>
            <person name="Louie T."/>
            <person name="Marra M."/>
            <person name="Masuy D."/>
            <person name="Matthews K."/>
            <person name="Michaeli S."/>
            <person name="Mottram J.C."/>
            <person name="Mueller-Auer S."/>
            <person name="Munden H."/>
            <person name="Nelson S."/>
            <person name="Norbertczak H."/>
            <person name="Oliver K."/>
            <person name="O'neil S."/>
            <person name="Pentony M."/>
            <person name="Pohl T.M."/>
            <person name="Price C."/>
            <person name="Purnelle B."/>
            <person name="Quail M.A."/>
            <person name="Rabbinowitsch E."/>
            <person name="Reinhardt R."/>
            <person name="Rieger M."/>
            <person name="Rinta J."/>
            <person name="Robben J."/>
            <person name="Robertson L."/>
            <person name="Ruiz J.C."/>
            <person name="Rutter S."/>
            <person name="Saunders D."/>
            <person name="Schaefer M."/>
            <person name="Schein J."/>
            <person name="Schwartz D.C."/>
            <person name="Seeger K."/>
            <person name="Seyler A."/>
            <person name="Sharp S."/>
            <person name="Shin H."/>
            <person name="Sivam D."/>
            <person name="Squares R."/>
            <person name="Squares S."/>
            <person name="Tosato V."/>
            <person name="Vogt C."/>
            <person name="Volckaert G."/>
            <person name="Wambutt R."/>
            <person name="Warren T."/>
            <person name="Wedler H."/>
            <person name="Woodward J."/>
            <person name="Zhou S."/>
            <person name="Zimmermann W."/>
            <person name="Smith D.F."/>
            <person name="Blackwell J.M."/>
            <person name="Stuart K.D."/>
            <person name="Barrell B.G."/>
            <person name="Myler P.J."/>
        </authorList>
    </citation>
    <scope>NUCLEOTIDE SEQUENCE [LARGE SCALE GENOMIC DNA]</scope>
    <source>
        <strain>MHOM/IL/81/Friedlin</strain>
    </source>
</reference>
<proteinExistence type="evidence at protein level"/>
<organism>
    <name type="scientific">Leishmania major</name>
    <dbReference type="NCBI Taxonomy" id="5664"/>
    <lineage>
        <taxon>Eukaryota</taxon>
        <taxon>Discoba</taxon>
        <taxon>Euglenozoa</taxon>
        <taxon>Kinetoplastea</taxon>
        <taxon>Metakinetoplastina</taxon>
        <taxon>Trypanosomatida</taxon>
        <taxon>Trypanosomatidae</taxon>
        <taxon>Leishmaniinae</taxon>
        <taxon>Leishmania</taxon>
    </lineage>
</organism>
<evidence type="ECO:0000250" key="1">
    <source>
        <dbReference type="UniProtKB" id="P62753"/>
    </source>
</evidence>
<evidence type="ECO:0000256" key="2">
    <source>
        <dbReference type="SAM" id="MobiDB-lite"/>
    </source>
</evidence>
<evidence type="ECO:0000305" key="3"/>
<evidence type="ECO:0007829" key="4">
    <source>
        <dbReference type="PDB" id="5OSG"/>
    </source>
</evidence>